<feature type="chain" id="PRO_1000198628" description="tRNA-specific 2-thiouridylase MnmA">
    <location>
        <begin position="1"/>
        <end position="374"/>
    </location>
</feature>
<feature type="region of interest" description="Interaction with target base in tRNA" evidence="1">
    <location>
        <begin position="99"/>
        <end position="101"/>
    </location>
</feature>
<feature type="region of interest" description="Interaction with tRNA" evidence="1">
    <location>
        <begin position="151"/>
        <end position="153"/>
    </location>
</feature>
<feature type="region of interest" description="Interaction with tRNA" evidence="1">
    <location>
        <begin position="313"/>
        <end position="314"/>
    </location>
</feature>
<feature type="active site" description="Nucleophile" evidence="1">
    <location>
        <position position="104"/>
    </location>
</feature>
<feature type="active site" description="Cysteine persulfide intermediate" evidence="1">
    <location>
        <position position="201"/>
    </location>
</feature>
<feature type="binding site" evidence="1">
    <location>
        <begin position="13"/>
        <end position="20"/>
    </location>
    <ligand>
        <name>ATP</name>
        <dbReference type="ChEBI" id="CHEBI:30616"/>
    </ligand>
</feature>
<feature type="binding site" evidence="1">
    <location>
        <position position="39"/>
    </location>
    <ligand>
        <name>ATP</name>
        <dbReference type="ChEBI" id="CHEBI:30616"/>
    </ligand>
</feature>
<feature type="binding site" evidence="1">
    <location>
        <position position="128"/>
    </location>
    <ligand>
        <name>ATP</name>
        <dbReference type="ChEBI" id="CHEBI:30616"/>
    </ligand>
</feature>
<feature type="site" description="Interaction with tRNA" evidence="1">
    <location>
        <position position="129"/>
    </location>
</feature>
<feature type="site" description="Interaction with tRNA" evidence="1">
    <location>
        <position position="345"/>
    </location>
</feature>
<feature type="disulfide bond" description="Alternate" evidence="1">
    <location>
        <begin position="104"/>
        <end position="201"/>
    </location>
</feature>
<gene>
    <name evidence="1" type="primary">mnmA</name>
    <name type="ordered locus">SEQ_2208</name>
</gene>
<organism>
    <name type="scientific">Streptococcus equi subsp. equi (strain 4047)</name>
    <dbReference type="NCBI Taxonomy" id="553482"/>
    <lineage>
        <taxon>Bacteria</taxon>
        <taxon>Bacillati</taxon>
        <taxon>Bacillota</taxon>
        <taxon>Bacilli</taxon>
        <taxon>Lactobacillales</taxon>
        <taxon>Streptococcaceae</taxon>
        <taxon>Streptococcus</taxon>
    </lineage>
</organism>
<dbReference type="EC" id="2.8.1.13" evidence="1"/>
<dbReference type="EMBL" id="FM204883">
    <property type="protein sequence ID" value="CAW95613.1"/>
    <property type="molecule type" value="Genomic_DNA"/>
</dbReference>
<dbReference type="SMR" id="C0MB53"/>
<dbReference type="KEGG" id="seu:SEQ_2208"/>
<dbReference type="HOGENOM" id="CLU_035188_1_0_9"/>
<dbReference type="Proteomes" id="UP000001365">
    <property type="component" value="Chromosome"/>
</dbReference>
<dbReference type="GO" id="GO:0005737">
    <property type="term" value="C:cytoplasm"/>
    <property type="evidence" value="ECO:0007669"/>
    <property type="project" value="UniProtKB-SubCell"/>
</dbReference>
<dbReference type="GO" id="GO:0005524">
    <property type="term" value="F:ATP binding"/>
    <property type="evidence" value="ECO:0007669"/>
    <property type="project" value="UniProtKB-KW"/>
</dbReference>
<dbReference type="GO" id="GO:0000049">
    <property type="term" value="F:tRNA binding"/>
    <property type="evidence" value="ECO:0007669"/>
    <property type="project" value="UniProtKB-KW"/>
</dbReference>
<dbReference type="GO" id="GO:0103016">
    <property type="term" value="F:tRNA-uridine 2-sulfurtransferase activity"/>
    <property type="evidence" value="ECO:0007669"/>
    <property type="project" value="UniProtKB-EC"/>
</dbReference>
<dbReference type="GO" id="GO:0002143">
    <property type="term" value="P:tRNA wobble position uridine thiolation"/>
    <property type="evidence" value="ECO:0007669"/>
    <property type="project" value="TreeGrafter"/>
</dbReference>
<dbReference type="CDD" id="cd01998">
    <property type="entry name" value="MnmA_TRMU-like"/>
    <property type="match status" value="1"/>
</dbReference>
<dbReference type="FunFam" id="2.30.30.280:FF:000001">
    <property type="entry name" value="tRNA-specific 2-thiouridylase MnmA"/>
    <property type="match status" value="1"/>
</dbReference>
<dbReference type="FunFam" id="2.40.30.10:FF:000023">
    <property type="entry name" value="tRNA-specific 2-thiouridylase MnmA"/>
    <property type="match status" value="1"/>
</dbReference>
<dbReference type="FunFam" id="3.40.50.620:FF:000004">
    <property type="entry name" value="tRNA-specific 2-thiouridylase MnmA"/>
    <property type="match status" value="1"/>
</dbReference>
<dbReference type="Gene3D" id="2.30.30.280">
    <property type="entry name" value="Adenine nucleotide alpha hydrolases-like domains"/>
    <property type="match status" value="1"/>
</dbReference>
<dbReference type="Gene3D" id="3.40.50.620">
    <property type="entry name" value="HUPs"/>
    <property type="match status" value="1"/>
</dbReference>
<dbReference type="Gene3D" id="2.40.30.10">
    <property type="entry name" value="Translation factors"/>
    <property type="match status" value="1"/>
</dbReference>
<dbReference type="HAMAP" id="MF_00144">
    <property type="entry name" value="tRNA_thiouridyl_MnmA"/>
    <property type="match status" value="1"/>
</dbReference>
<dbReference type="InterPro" id="IPR004506">
    <property type="entry name" value="MnmA-like"/>
</dbReference>
<dbReference type="InterPro" id="IPR046885">
    <property type="entry name" value="MnmA-like_C"/>
</dbReference>
<dbReference type="InterPro" id="IPR046884">
    <property type="entry name" value="MnmA-like_central"/>
</dbReference>
<dbReference type="InterPro" id="IPR023382">
    <property type="entry name" value="MnmA-like_central_sf"/>
</dbReference>
<dbReference type="InterPro" id="IPR014729">
    <property type="entry name" value="Rossmann-like_a/b/a_fold"/>
</dbReference>
<dbReference type="NCBIfam" id="NF001138">
    <property type="entry name" value="PRK00143.1"/>
    <property type="match status" value="1"/>
</dbReference>
<dbReference type="NCBIfam" id="TIGR00420">
    <property type="entry name" value="trmU"/>
    <property type="match status" value="1"/>
</dbReference>
<dbReference type="PANTHER" id="PTHR11933:SF5">
    <property type="entry name" value="MITOCHONDRIAL TRNA-SPECIFIC 2-THIOURIDYLASE 1"/>
    <property type="match status" value="1"/>
</dbReference>
<dbReference type="PANTHER" id="PTHR11933">
    <property type="entry name" value="TRNA 5-METHYLAMINOMETHYL-2-THIOURIDYLATE -METHYLTRANSFERASE"/>
    <property type="match status" value="1"/>
</dbReference>
<dbReference type="Pfam" id="PF03054">
    <property type="entry name" value="tRNA_Me_trans"/>
    <property type="match status" value="1"/>
</dbReference>
<dbReference type="Pfam" id="PF20258">
    <property type="entry name" value="tRNA_Me_trans_C"/>
    <property type="match status" value="1"/>
</dbReference>
<dbReference type="Pfam" id="PF20259">
    <property type="entry name" value="tRNA_Me_trans_M"/>
    <property type="match status" value="1"/>
</dbReference>
<dbReference type="SUPFAM" id="SSF52402">
    <property type="entry name" value="Adenine nucleotide alpha hydrolases-like"/>
    <property type="match status" value="1"/>
</dbReference>
<protein>
    <recommendedName>
        <fullName evidence="1">tRNA-specific 2-thiouridylase MnmA</fullName>
        <ecNumber evidence="1">2.8.1.13</ecNumber>
    </recommendedName>
</protein>
<proteinExistence type="inferred from homology"/>
<comment type="function">
    <text evidence="1">Catalyzes the 2-thiolation of uridine at the wobble position (U34) of tRNA, leading to the formation of s(2)U34.</text>
</comment>
<comment type="catalytic activity">
    <reaction evidence="1">
        <text>S-sulfanyl-L-cysteinyl-[protein] + uridine(34) in tRNA + AH2 + ATP = 2-thiouridine(34) in tRNA + L-cysteinyl-[protein] + A + AMP + diphosphate + H(+)</text>
        <dbReference type="Rhea" id="RHEA:47032"/>
        <dbReference type="Rhea" id="RHEA-COMP:10131"/>
        <dbReference type="Rhea" id="RHEA-COMP:11726"/>
        <dbReference type="Rhea" id="RHEA-COMP:11727"/>
        <dbReference type="Rhea" id="RHEA-COMP:11728"/>
        <dbReference type="ChEBI" id="CHEBI:13193"/>
        <dbReference type="ChEBI" id="CHEBI:15378"/>
        <dbReference type="ChEBI" id="CHEBI:17499"/>
        <dbReference type="ChEBI" id="CHEBI:29950"/>
        <dbReference type="ChEBI" id="CHEBI:30616"/>
        <dbReference type="ChEBI" id="CHEBI:33019"/>
        <dbReference type="ChEBI" id="CHEBI:61963"/>
        <dbReference type="ChEBI" id="CHEBI:65315"/>
        <dbReference type="ChEBI" id="CHEBI:87170"/>
        <dbReference type="ChEBI" id="CHEBI:456215"/>
        <dbReference type="EC" id="2.8.1.13"/>
    </reaction>
</comment>
<comment type="subcellular location">
    <subcellularLocation>
        <location evidence="1">Cytoplasm</location>
    </subcellularLocation>
</comment>
<comment type="similarity">
    <text evidence="1">Belongs to the MnmA/TRMU family.</text>
</comment>
<keyword id="KW-0067">ATP-binding</keyword>
<keyword id="KW-0963">Cytoplasm</keyword>
<keyword id="KW-1015">Disulfide bond</keyword>
<keyword id="KW-0547">Nucleotide-binding</keyword>
<keyword id="KW-0694">RNA-binding</keyword>
<keyword id="KW-0808">Transferase</keyword>
<keyword id="KW-0819">tRNA processing</keyword>
<keyword id="KW-0820">tRNA-binding</keyword>
<name>MNMA_STRE4</name>
<accession>C0MB53</accession>
<reference key="1">
    <citation type="journal article" date="2009" name="PLoS Pathog.">
        <title>Genomic evidence for the evolution of Streptococcus equi: host restriction, increased virulence, and genetic exchange with human pathogens.</title>
        <authorList>
            <person name="Holden M.T.G."/>
            <person name="Heather Z."/>
            <person name="Paillot R."/>
            <person name="Steward K.F."/>
            <person name="Webb K."/>
            <person name="Ainslie F."/>
            <person name="Jourdan T."/>
            <person name="Bason N.C."/>
            <person name="Holroyd N.E."/>
            <person name="Mungall K."/>
            <person name="Quail M.A."/>
            <person name="Sanders M."/>
            <person name="Simmonds M."/>
            <person name="Willey D."/>
            <person name="Brooks K."/>
            <person name="Aanensen D.M."/>
            <person name="Spratt B.G."/>
            <person name="Jolley K.A."/>
            <person name="Maiden M.C.J."/>
            <person name="Kehoe M."/>
            <person name="Chanter N."/>
            <person name="Bentley S.D."/>
            <person name="Robinson C."/>
            <person name="Maskell D.J."/>
            <person name="Parkhill J."/>
            <person name="Waller A.S."/>
        </authorList>
    </citation>
    <scope>NUCLEOTIDE SEQUENCE [LARGE SCALE GENOMIC DNA]</scope>
    <source>
        <strain>4047</strain>
    </source>
</reference>
<evidence type="ECO:0000255" key="1">
    <source>
        <dbReference type="HAMAP-Rule" id="MF_00144"/>
    </source>
</evidence>
<sequence length="374" mass="41879">MMTDNSKTRVVVGMSGGVDSSVTALLLKEQGYDVIGVFMKNWDDTDEFGVCTATEDYKDVAAVADQIGIPYYSVNFEKEYWDRVFEYFLAEYRSGRTPNPDVMCNKEIKFKAFLDYAMTLGADYVATGHYAQIKRDENGVVHMLRGLDKGKDQTYFLSQLSQEQLQKTMFPLGHLQKSEVRAIAEQAGLATAKKKDSTGICFISEKNFKTFLSHYLPAQKGRMMTVDGRDMGEHAGLMYYTIGQRGGLGIGGQQGGDNKPWFVVGKDLSQNILYVGQGFYHESLMSTSLDASVIQFTREVPEEFTLECTAKFRYRQPDSKVTVHVKKDKAKVVFAEPQRAITPGQAVVFYDGHECLGGGIIDMAYKDGEPCQYI</sequence>